<organism>
    <name type="scientific">Aeromonas hydrophila subsp. hydrophila (strain ATCC 7966 / DSM 30187 / BCRC 13018 / CCUG 14551 / JCM 1027 / KCTC 2358 / NCIMB 9240 / NCTC 8049)</name>
    <dbReference type="NCBI Taxonomy" id="380703"/>
    <lineage>
        <taxon>Bacteria</taxon>
        <taxon>Pseudomonadati</taxon>
        <taxon>Pseudomonadota</taxon>
        <taxon>Gammaproteobacteria</taxon>
        <taxon>Aeromonadales</taxon>
        <taxon>Aeromonadaceae</taxon>
        <taxon>Aeromonas</taxon>
    </lineage>
</organism>
<proteinExistence type="inferred from homology"/>
<sequence length="130" mass="14785">MAENQYYGTGRRKSSTARVFIKAGSGKIVINQRSLEQYFGRPTARMVVRQPLELVEMTEKLDLYITVNGGGISGQAGAIRHGITRALMQYDETLRSELRKAGFVTRDARKVERKKVGLHKARKRPQYSKR</sequence>
<comment type="similarity">
    <text evidence="1">Belongs to the universal ribosomal protein uS9 family.</text>
</comment>
<reference key="1">
    <citation type="journal article" date="2006" name="J. Bacteriol.">
        <title>Genome sequence of Aeromonas hydrophila ATCC 7966T: jack of all trades.</title>
        <authorList>
            <person name="Seshadri R."/>
            <person name="Joseph S.W."/>
            <person name="Chopra A.K."/>
            <person name="Sha J."/>
            <person name="Shaw J."/>
            <person name="Graf J."/>
            <person name="Haft D.H."/>
            <person name="Wu M."/>
            <person name="Ren Q."/>
            <person name="Rosovitz M.J."/>
            <person name="Madupu R."/>
            <person name="Tallon L."/>
            <person name="Kim M."/>
            <person name="Jin S."/>
            <person name="Vuong H."/>
            <person name="Stine O.C."/>
            <person name="Ali A."/>
            <person name="Horneman A.J."/>
            <person name="Heidelberg J.F."/>
        </authorList>
    </citation>
    <scope>NUCLEOTIDE SEQUENCE [LARGE SCALE GENOMIC DNA]</scope>
    <source>
        <strain>ATCC 7966 / DSM 30187 / BCRC 13018 / CCUG 14551 / JCM 1027 / KCTC 2358 / NCIMB 9240 / NCTC 8049</strain>
    </source>
</reference>
<evidence type="ECO:0000255" key="1">
    <source>
        <dbReference type="HAMAP-Rule" id="MF_00532"/>
    </source>
</evidence>
<evidence type="ECO:0000305" key="2"/>
<dbReference type="EMBL" id="CP000462">
    <property type="protein sequence ID" value="ABK36275.1"/>
    <property type="molecule type" value="Genomic_DNA"/>
</dbReference>
<dbReference type="RefSeq" id="WP_005336286.1">
    <property type="nucleotide sequence ID" value="NC_008570.1"/>
</dbReference>
<dbReference type="RefSeq" id="YP_858343.1">
    <property type="nucleotide sequence ID" value="NC_008570.1"/>
</dbReference>
<dbReference type="SMR" id="A0KPZ2"/>
<dbReference type="STRING" id="380703.AHA_3904"/>
<dbReference type="EnsemblBacteria" id="ABK36275">
    <property type="protein sequence ID" value="ABK36275"/>
    <property type="gene ID" value="AHA_3904"/>
</dbReference>
<dbReference type="GeneID" id="97858428"/>
<dbReference type="KEGG" id="aha:AHA_3904"/>
<dbReference type="PATRIC" id="fig|380703.7.peg.3874"/>
<dbReference type="eggNOG" id="COG0103">
    <property type="taxonomic scope" value="Bacteria"/>
</dbReference>
<dbReference type="HOGENOM" id="CLU_046483_2_1_6"/>
<dbReference type="OrthoDB" id="9803965at2"/>
<dbReference type="PRO" id="PR:A0KPZ2"/>
<dbReference type="Proteomes" id="UP000000756">
    <property type="component" value="Chromosome"/>
</dbReference>
<dbReference type="GO" id="GO:0022627">
    <property type="term" value="C:cytosolic small ribosomal subunit"/>
    <property type="evidence" value="ECO:0007669"/>
    <property type="project" value="TreeGrafter"/>
</dbReference>
<dbReference type="GO" id="GO:0003723">
    <property type="term" value="F:RNA binding"/>
    <property type="evidence" value="ECO:0007669"/>
    <property type="project" value="TreeGrafter"/>
</dbReference>
<dbReference type="GO" id="GO:0003735">
    <property type="term" value="F:structural constituent of ribosome"/>
    <property type="evidence" value="ECO:0007669"/>
    <property type="project" value="InterPro"/>
</dbReference>
<dbReference type="GO" id="GO:0006412">
    <property type="term" value="P:translation"/>
    <property type="evidence" value="ECO:0007669"/>
    <property type="project" value="UniProtKB-UniRule"/>
</dbReference>
<dbReference type="FunFam" id="3.30.230.10:FF:000001">
    <property type="entry name" value="30S ribosomal protein S9"/>
    <property type="match status" value="1"/>
</dbReference>
<dbReference type="Gene3D" id="3.30.230.10">
    <property type="match status" value="1"/>
</dbReference>
<dbReference type="HAMAP" id="MF_00532_B">
    <property type="entry name" value="Ribosomal_uS9_B"/>
    <property type="match status" value="1"/>
</dbReference>
<dbReference type="InterPro" id="IPR020568">
    <property type="entry name" value="Ribosomal_Su5_D2-typ_SF"/>
</dbReference>
<dbReference type="InterPro" id="IPR000754">
    <property type="entry name" value="Ribosomal_uS9"/>
</dbReference>
<dbReference type="InterPro" id="IPR023035">
    <property type="entry name" value="Ribosomal_uS9_bac/plastid"/>
</dbReference>
<dbReference type="InterPro" id="IPR020574">
    <property type="entry name" value="Ribosomal_uS9_CS"/>
</dbReference>
<dbReference type="InterPro" id="IPR014721">
    <property type="entry name" value="Ribsml_uS5_D2-typ_fold_subgr"/>
</dbReference>
<dbReference type="NCBIfam" id="NF001099">
    <property type="entry name" value="PRK00132.1"/>
    <property type="match status" value="1"/>
</dbReference>
<dbReference type="PANTHER" id="PTHR21569">
    <property type="entry name" value="RIBOSOMAL PROTEIN S9"/>
    <property type="match status" value="1"/>
</dbReference>
<dbReference type="PANTHER" id="PTHR21569:SF1">
    <property type="entry name" value="SMALL RIBOSOMAL SUBUNIT PROTEIN US9M"/>
    <property type="match status" value="1"/>
</dbReference>
<dbReference type="Pfam" id="PF00380">
    <property type="entry name" value="Ribosomal_S9"/>
    <property type="match status" value="1"/>
</dbReference>
<dbReference type="SUPFAM" id="SSF54211">
    <property type="entry name" value="Ribosomal protein S5 domain 2-like"/>
    <property type="match status" value="1"/>
</dbReference>
<dbReference type="PROSITE" id="PS00360">
    <property type="entry name" value="RIBOSOMAL_S9"/>
    <property type="match status" value="1"/>
</dbReference>
<gene>
    <name evidence="1" type="primary">rpsI</name>
    <name type="ordered locus">AHA_3904</name>
</gene>
<accession>A0KPZ2</accession>
<keyword id="KW-1185">Reference proteome</keyword>
<keyword id="KW-0687">Ribonucleoprotein</keyword>
<keyword id="KW-0689">Ribosomal protein</keyword>
<name>RS9_AERHH</name>
<feature type="chain" id="PRO_1000051150" description="Small ribosomal subunit protein uS9">
    <location>
        <begin position="1"/>
        <end position="130"/>
    </location>
</feature>
<protein>
    <recommendedName>
        <fullName evidence="1">Small ribosomal subunit protein uS9</fullName>
    </recommendedName>
    <alternativeName>
        <fullName evidence="2">30S ribosomal protein S9</fullName>
    </alternativeName>
</protein>